<organism>
    <name type="scientific">Oreochromis niloticus</name>
    <name type="common">Nile tilapia</name>
    <name type="synonym">Tilapia nilotica</name>
    <dbReference type="NCBI Taxonomy" id="8128"/>
    <lineage>
        <taxon>Eukaryota</taxon>
        <taxon>Metazoa</taxon>
        <taxon>Chordata</taxon>
        <taxon>Craniata</taxon>
        <taxon>Vertebrata</taxon>
        <taxon>Euteleostomi</taxon>
        <taxon>Actinopterygii</taxon>
        <taxon>Neopterygii</taxon>
        <taxon>Teleostei</taxon>
        <taxon>Neoteleostei</taxon>
        <taxon>Acanthomorphata</taxon>
        <taxon>Ovalentaria</taxon>
        <taxon>Cichlomorphae</taxon>
        <taxon>Cichliformes</taxon>
        <taxon>Cichlidae</taxon>
        <taxon>African cichlids</taxon>
        <taxon>Pseudocrenilabrinae</taxon>
        <taxon>Oreochromini</taxon>
        <taxon>Oreochromis</taxon>
    </lineage>
</organism>
<dbReference type="EMBL" id="X54078">
    <property type="protein sequence ID" value="CAA38015.1"/>
    <property type="molecule type" value="Genomic_DNA"/>
</dbReference>
<dbReference type="RefSeq" id="XP_003451199.1">
    <property type="nucleotide sequence ID" value="XM_003451151.5"/>
</dbReference>
<dbReference type="RefSeq" id="XP_003454720.1">
    <property type="nucleotide sequence ID" value="XM_003454672.5"/>
</dbReference>
<dbReference type="RefSeq" id="XP_003458488.1">
    <property type="nucleotide sequence ID" value="XM_003458440.5"/>
</dbReference>
<dbReference type="RefSeq" id="XP_003459140.1">
    <property type="nucleotide sequence ID" value="XM_003459092.5"/>
</dbReference>
<dbReference type="RefSeq" id="XP_003459577.1">
    <property type="nucleotide sequence ID" value="XM_003459529.5"/>
</dbReference>
<dbReference type="RefSeq" id="XP_003459580.1">
    <property type="nucleotide sequence ID" value="XM_003459532.5"/>
</dbReference>
<dbReference type="RefSeq" id="XP_005455914.1">
    <property type="nucleotide sequence ID" value="XM_005455857.4"/>
</dbReference>
<dbReference type="RefSeq" id="XP_005462225.1">
    <property type="nucleotide sequence ID" value="XM_005462168.4"/>
</dbReference>
<dbReference type="RefSeq" id="XP_005465169.1">
    <property type="nucleotide sequence ID" value="XM_005465112.4"/>
</dbReference>
<dbReference type="RefSeq" id="XP_005466235.1">
    <property type="nucleotide sequence ID" value="XM_005466178.4"/>
</dbReference>
<dbReference type="RefSeq" id="XP_013129005.1">
    <property type="nucleotide sequence ID" value="XM_013273551.2"/>
</dbReference>
<dbReference type="RefSeq" id="XP_013130408.1">
    <property type="nucleotide sequence ID" value="XM_013274954.3"/>
</dbReference>
<dbReference type="RefSeq" id="XP_019206828.1">
    <property type="nucleotide sequence ID" value="XM_019351283.1"/>
</dbReference>
<dbReference type="RefSeq" id="XP_019209876.1">
    <property type="nucleotide sequence ID" value="XM_019354331.2"/>
</dbReference>
<dbReference type="RefSeq" id="XP_025755197.1">
    <property type="nucleotide sequence ID" value="XM_025899412.1"/>
</dbReference>
<dbReference type="RefSeq" id="XP_025758120.1">
    <property type="nucleotide sequence ID" value="XM_025902335.1"/>
</dbReference>
<dbReference type="RefSeq" id="XP_025758429.1">
    <property type="nucleotide sequence ID" value="XM_025902644.1"/>
</dbReference>
<dbReference type="SMR" id="P62796"/>
<dbReference type="FunCoup" id="P62796">
    <property type="interactions" value="1637"/>
</dbReference>
<dbReference type="STRING" id="8128.ENSONIP00000026073"/>
<dbReference type="Ensembl" id="ENSONIT00000026094.2">
    <property type="protein sequence ID" value="ENSONIP00000026073.1"/>
    <property type="gene ID" value="ENSONIG00000020768.2"/>
</dbReference>
<dbReference type="GeneID" id="100691120"/>
<dbReference type="GeneID" id="100693547"/>
<dbReference type="GeneID" id="100694299"/>
<dbReference type="GeneID" id="100694836"/>
<dbReference type="GeneID" id="100695624"/>
<dbReference type="GeneID" id="100700428"/>
<dbReference type="GeneID" id="100702755"/>
<dbReference type="GeneID" id="100702942"/>
<dbReference type="GeneID" id="100707196"/>
<dbReference type="GeneID" id="100707512"/>
<dbReference type="GeneID" id="100711673"/>
<dbReference type="GeneID" id="100712429"/>
<dbReference type="GeneID" id="102078282"/>
<dbReference type="GeneID" id="109198966"/>
<dbReference type="GeneID" id="109203505"/>
<dbReference type="KEGG" id="onl:100691120"/>
<dbReference type="KEGG" id="onl:100693547"/>
<dbReference type="KEGG" id="onl:100694299"/>
<dbReference type="KEGG" id="onl:100694836"/>
<dbReference type="KEGG" id="onl:100695624"/>
<dbReference type="KEGG" id="onl:100700428"/>
<dbReference type="KEGG" id="onl:100702755"/>
<dbReference type="KEGG" id="onl:100702942"/>
<dbReference type="KEGG" id="onl:100707512"/>
<dbReference type="KEGG" id="onl:100711673"/>
<dbReference type="KEGG" id="onl:100712429"/>
<dbReference type="KEGG" id="onl:109198966"/>
<dbReference type="eggNOG" id="KOG3467">
    <property type="taxonomic scope" value="Eukaryota"/>
</dbReference>
<dbReference type="GeneTree" id="ENSGT01060000248528"/>
<dbReference type="HOGENOM" id="CLU_109117_2_3_1"/>
<dbReference type="InParanoid" id="P62796"/>
<dbReference type="OMA" id="QKEHING"/>
<dbReference type="OrthoDB" id="8735094at2759"/>
<dbReference type="CD-CODE" id="9ED295E5">
    <property type="entry name" value="Nucleolus"/>
</dbReference>
<dbReference type="Proteomes" id="UP000005207">
    <property type="component" value="Linkage group LG17"/>
</dbReference>
<dbReference type="GO" id="GO:0000786">
    <property type="term" value="C:nucleosome"/>
    <property type="evidence" value="ECO:0007669"/>
    <property type="project" value="UniProtKB-KW"/>
</dbReference>
<dbReference type="GO" id="GO:0005634">
    <property type="term" value="C:nucleus"/>
    <property type="evidence" value="ECO:0007669"/>
    <property type="project" value="UniProtKB-SubCell"/>
</dbReference>
<dbReference type="GO" id="GO:0003677">
    <property type="term" value="F:DNA binding"/>
    <property type="evidence" value="ECO:0007669"/>
    <property type="project" value="UniProtKB-KW"/>
</dbReference>
<dbReference type="GO" id="GO:0046982">
    <property type="term" value="F:protein heterodimerization activity"/>
    <property type="evidence" value="ECO:0007669"/>
    <property type="project" value="InterPro"/>
</dbReference>
<dbReference type="GO" id="GO:0030527">
    <property type="term" value="F:structural constituent of chromatin"/>
    <property type="evidence" value="ECO:0007669"/>
    <property type="project" value="InterPro"/>
</dbReference>
<dbReference type="CDD" id="cd22912">
    <property type="entry name" value="HFD_H4"/>
    <property type="match status" value="1"/>
</dbReference>
<dbReference type="FunFam" id="1.10.20.10:FF:000002">
    <property type="entry name" value="Histone H4"/>
    <property type="match status" value="1"/>
</dbReference>
<dbReference type="Gene3D" id="1.10.20.10">
    <property type="entry name" value="Histone, subunit A"/>
    <property type="match status" value="1"/>
</dbReference>
<dbReference type="InterPro" id="IPR035425">
    <property type="entry name" value="CENP-T/H4_C"/>
</dbReference>
<dbReference type="InterPro" id="IPR009072">
    <property type="entry name" value="Histone-fold"/>
</dbReference>
<dbReference type="InterPro" id="IPR001951">
    <property type="entry name" value="Histone_H4"/>
</dbReference>
<dbReference type="InterPro" id="IPR019809">
    <property type="entry name" value="Histone_H4_CS"/>
</dbReference>
<dbReference type="InterPro" id="IPR004823">
    <property type="entry name" value="TAF_TATA-bd_Histone-like_dom"/>
</dbReference>
<dbReference type="PANTHER" id="PTHR10484">
    <property type="entry name" value="HISTONE H4"/>
    <property type="match status" value="1"/>
</dbReference>
<dbReference type="Pfam" id="PF15511">
    <property type="entry name" value="CENP-T_C"/>
    <property type="match status" value="1"/>
</dbReference>
<dbReference type="PRINTS" id="PR00623">
    <property type="entry name" value="HISTONEH4"/>
</dbReference>
<dbReference type="SMART" id="SM00417">
    <property type="entry name" value="H4"/>
    <property type="match status" value="1"/>
</dbReference>
<dbReference type="SMART" id="SM00803">
    <property type="entry name" value="TAF"/>
    <property type="match status" value="1"/>
</dbReference>
<dbReference type="SUPFAM" id="SSF47113">
    <property type="entry name" value="Histone-fold"/>
    <property type="match status" value="1"/>
</dbReference>
<dbReference type="PROSITE" id="PS00047">
    <property type="entry name" value="HISTONE_H4"/>
    <property type="match status" value="1"/>
</dbReference>
<reference key="1">
    <citation type="journal article" date="1993" name="J. Evol. Biol.">
        <title>An unusual histone H4 gene from Tilapia nilotica exhibiting characteristics of both a replication-dependent histone and a basal-expression histone: evolutionary considerations.</title>
        <authorList>
            <person name="Englander E."/>
            <person name="Moav B."/>
            <person name="Tabachnik M."/>
            <person name="Shuali Y."/>
            <person name="Graur D."/>
        </authorList>
    </citation>
    <scope>NUCLEOTIDE SEQUENCE [GENOMIC DNA]</scope>
</reference>
<comment type="function">
    <text>Core component of nucleosome. Nucleosomes wrap and compact DNA into chromatin, limiting DNA accessibility to the cellular machineries which require DNA as a template. Histones thereby play a central role in transcription regulation, DNA repair, DNA replication and chromosomal stability. DNA accessibility is regulated via a complex set of post-translational modifications of histones, also called histone code, and nucleosome remodeling.</text>
</comment>
<comment type="subunit">
    <text>The nucleosome is a histone octamer containing two molecules each of H2A, H2B, H3 and H4 assembled in one H3-H4 heterotetramer and two H2A-H2B heterodimers. The octamer wraps approximately 147 bp of DNA.</text>
</comment>
<comment type="subcellular location">
    <subcellularLocation>
        <location evidence="1">Nucleus</location>
    </subcellularLocation>
    <subcellularLocation>
        <location evidence="1">Chromosome</location>
    </subcellularLocation>
</comment>
<comment type="PTM">
    <text evidence="2">Acetylation at Lys-6 (H4K5ac), Lys-9 (H4K8ac), Lys-13 (H4K12ac) and Lys-17 (H4K16ac) occurs in coding regions of the genome but not in heterochromatin.</text>
</comment>
<comment type="PTM">
    <text evidence="2">Citrullination at Arg-4 (H4R3ci) by PADI4 impairs methylation.</text>
</comment>
<comment type="PTM">
    <text evidence="2">Monomethylation and asymmetric dimethylation at Arg-4 (H4R3me1 and H4R3me2a, respectively) by PRMT1 favors acetylation at Lys-9 (H4K8ac) and Lys-13 (H4K12ac). Demethylation is performed by JMJD6. Symmetric dimethylation on Arg-4 (H4R3me2s) by the PRDM1/PRMT5 complex may play a crucial role in the germ-cell lineage (By similarity).</text>
</comment>
<comment type="PTM">
    <text evidence="2">Monomethylated, dimethylated or trimethylated at Lys-21 (H4K20me1, H4K20me2, H4K20me3). Monomethylation is performed by KMT5A/SET8. Trimethylation is performed by KMT5B and KMT5C and induces gene silencing. Monomethylated at Lys-13 (H4K12me1) by N6AMT1; H4K12me1 modification is present at the promoters of numerous genes encoding cell cycle regulators.</text>
</comment>
<comment type="PTM">
    <text evidence="2">Acetyl-methylated at Lys-6 and Lys-13 (H4K5acme and H4K12acme, respectively), acetyl-methylation is an epigenetic mark of active chromatin associated with increased transcriptional initiation. Acetyl-methylation is formed by acetylation by EP300/p300 of lysine residues that are already monomethylated on the same side chain. H4K5acme and H4K12acme marks specifically bind BRD2.</text>
</comment>
<comment type="PTM">
    <text evidence="2">Phosphorylated by pak2 at Ser-48 (H4S47ph). This phosphorylation increases the association of H3.3-H4 with the histone chaperone HIRA, thus promoting nucleosome assembly of H3.3-H4 and inhibiting nucleosome assembly of H3.1-H4 (By similarity).</text>
</comment>
<comment type="PTM">
    <text evidence="2">Ubiquitinated by the CUL4-DDB-RBX1 complex in response to ultraviolet irradiation. This may weaken the interaction between histones and DNA and facilitate DNA accessibility to repair proteins. Monoubiquitinated at Lys-92 of histone H4 (H4K91ub1) in response to DNA damage. The exact role of H4K91ub1 in DNA damage response is still unclear but it may function as a licensing signal for additional histone H4 post-translational modifications such as H4 Lys-21 methylation (H4K20me) (By similarity).</text>
</comment>
<comment type="PTM">
    <text evidence="2">Sumoylated, which is associated with transcriptional repression.</text>
</comment>
<comment type="PTM">
    <text evidence="3">Butyrylation of histones marks active promoters and competes with histone acetylation.</text>
</comment>
<comment type="PTM">
    <text evidence="2">Glutarylation at Lys-92 (H4K91glu) destabilizes nucleosomes by promoting dissociation of the H2A-H2B dimers from nucleosomes.</text>
</comment>
<comment type="PTM">
    <text evidence="2">Ufmylated; monofmylated by UFL1 at Lys-32 (H4K31Ufm1) in response to DNA damage.</text>
</comment>
<comment type="PTM">
    <text evidence="2">Lactylated in macrophages by EP300/P300 by using lactoyl-CoA directly derived from endogenous or exogenous lactate, leading to stimulates gene transcription. Delactylated by SIRT3 at Lys-17 (H4K16la).</text>
</comment>
<comment type="similarity">
    <text evidence="5">Belongs to the histone H4 family.</text>
</comment>
<sequence length="103" mass="11367">MSGRGKGGKGLGKGGAKRHRKVLRDNIQGITKPAIRRLARRGGVKRISGLIYEETRGVLKVFLENVIRDAVTYTEHAKRKTVTAMDVVYALKRQGRTLYGFGG</sequence>
<proteinExistence type="inferred from homology"/>
<accession>P62796</accession>
<accession>P02304</accession>
<accession>P02305</accession>
<evidence type="ECO:0000250" key="1"/>
<evidence type="ECO:0000250" key="2">
    <source>
        <dbReference type="UniProtKB" id="P62805"/>
    </source>
</evidence>
<evidence type="ECO:0000250" key="3">
    <source>
        <dbReference type="UniProtKB" id="P62806"/>
    </source>
</evidence>
<evidence type="ECO:0000256" key="4">
    <source>
        <dbReference type="SAM" id="MobiDB-lite"/>
    </source>
</evidence>
<evidence type="ECO:0000305" key="5"/>
<feature type="initiator methionine" description="Removed" evidence="1">
    <location>
        <position position="1"/>
    </location>
</feature>
<feature type="chain" id="PRO_0000158339" description="Histone H4">
    <location>
        <begin position="2"/>
        <end position="103"/>
    </location>
</feature>
<feature type="DNA-binding region">
    <location>
        <begin position="17"/>
        <end position="21"/>
    </location>
</feature>
<feature type="region of interest" description="Disordered" evidence="4">
    <location>
        <begin position="1"/>
        <end position="20"/>
    </location>
</feature>
<feature type="compositionally biased region" description="Gly residues" evidence="4">
    <location>
        <begin position="1"/>
        <end position="14"/>
    </location>
</feature>
<feature type="modified residue" description="N-acetylserine" evidence="2">
    <location>
        <position position="2"/>
    </location>
</feature>
<feature type="modified residue" description="Phosphoserine" evidence="2">
    <location>
        <position position="2"/>
    </location>
</feature>
<feature type="modified residue" description="Asymmetric dimethylarginine; by PRMT1; alternate" evidence="2">
    <location>
        <position position="4"/>
    </location>
</feature>
<feature type="modified residue" description="Citrulline; alternate" evidence="2">
    <location>
        <position position="4"/>
    </location>
</feature>
<feature type="modified residue" description="Omega-N-methylarginine; by PRMT1; alternate" evidence="2">
    <location>
        <position position="4"/>
    </location>
</feature>
<feature type="modified residue" description="Symmetric dimethylarginine; by PRMT5 and PRMT7; alternate" evidence="2">
    <location>
        <position position="4"/>
    </location>
</feature>
<feature type="modified residue" description="N6-(2-hydroxyisobutyryl)lysine; alternate" evidence="2">
    <location>
        <position position="6"/>
    </location>
</feature>
<feature type="modified residue" description="N6-acetyl-N6-methyllysine; alternate" evidence="2">
    <location>
        <position position="6"/>
    </location>
</feature>
<feature type="modified residue" description="N6-acetyllysine" evidence="2">
    <location>
        <position position="6"/>
    </location>
</feature>
<feature type="modified residue" description="N6-butyryllysine; alternate" evidence="2">
    <location>
        <position position="6"/>
    </location>
</feature>
<feature type="modified residue" description="N6-glutaryllysine; alternate" evidence="2">
    <location>
        <position position="6"/>
    </location>
</feature>
<feature type="modified residue" description="N6-lactoyllysine; alternate" evidence="2">
    <location>
        <position position="6"/>
    </location>
</feature>
<feature type="modified residue" description="N6-(2-hydroxyisobutyryl)lysine; alternate" evidence="2">
    <location>
        <position position="9"/>
    </location>
</feature>
<feature type="modified residue" description="N6-acetyllysine" evidence="2">
    <location>
        <position position="9"/>
    </location>
</feature>
<feature type="modified residue" description="N6-butyryllysine; alternate" evidence="2">
    <location>
        <position position="9"/>
    </location>
</feature>
<feature type="modified residue" description="N6-lactoyllysine; alternate" evidence="2">
    <location>
        <position position="9"/>
    </location>
</feature>
<feature type="modified residue" description="N6-propionyllysine; alternate" evidence="2">
    <location>
        <position position="9"/>
    </location>
</feature>
<feature type="modified residue" description="N6-(2-hydroxyisobutyryl)lysine; alternate" evidence="2">
    <location>
        <position position="13"/>
    </location>
</feature>
<feature type="modified residue" description="N6-acetyl-N6-methyllysine; alternate" evidence="2">
    <location>
        <position position="13"/>
    </location>
</feature>
<feature type="modified residue" description="N6-acetyllysine" evidence="2">
    <location>
        <position position="13"/>
    </location>
</feature>
<feature type="modified residue" description="N6-butyryllysine; alternate" evidence="2">
    <location>
        <position position="13"/>
    </location>
</feature>
<feature type="modified residue" description="N6-glutaryllysine; alternate" evidence="2">
    <location>
        <position position="13"/>
    </location>
</feature>
<feature type="modified residue" description="N6-lactoyllysine; alternate" evidence="2">
    <location>
        <position position="13"/>
    </location>
</feature>
<feature type="modified residue" description="N6-methyllysine; alternate" evidence="2">
    <location>
        <position position="13"/>
    </location>
</feature>
<feature type="modified residue" description="N6-(2-hydroxyisobutyryl)lysine; alternate" evidence="2">
    <location>
        <position position="17"/>
    </location>
</feature>
<feature type="modified residue" description="N6-acetyllysine" evidence="2">
    <location>
        <position position="17"/>
    </location>
</feature>
<feature type="modified residue" description="N6-butyryllysine; alternate" evidence="2">
    <location>
        <position position="17"/>
    </location>
</feature>
<feature type="modified residue" description="N6-lactoyllysine; alternate" evidence="2">
    <location>
        <position position="17"/>
    </location>
</feature>
<feature type="modified residue" description="N6-propionyllysine; alternate" evidence="2">
    <location>
        <position position="17"/>
    </location>
</feature>
<feature type="modified residue" description="N6,N6,N6-trimethyllysine; alternate" evidence="2">
    <location>
        <position position="21"/>
    </location>
</feature>
<feature type="modified residue" description="N6,N6-dimethyllysine; alternate" evidence="2">
    <location>
        <position position="21"/>
    </location>
</feature>
<feature type="modified residue" description="N6-methyllysine; alternate" evidence="2">
    <location>
        <position position="21"/>
    </location>
</feature>
<feature type="modified residue" description="N6-(2-hydroxyisobutyryl)lysine; alternate" evidence="2">
    <location>
        <position position="32"/>
    </location>
</feature>
<feature type="modified residue" description="N6-acetyllysine" evidence="2">
    <location>
        <position position="32"/>
    </location>
</feature>
<feature type="modified residue" description="N6-butyryllysine; alternate" evidence="2">
    <location>
        <position position="32"/>
    </location>
</feature>
<feature type="modified residue" description="N6-glutaryllysine; alternate" evidence="2">
    <location>
        <position position="32"/>
    </location>
</feature>
<feature type="modified residue" description="N6-lactoyllysine; alternate" evidence="2">
    <location>
        <position position="32"/>
    </location>
</feature>
<feature type="modified residue" description="N6-propionyllysine; alternate" evidence="2">
    <location>
        <position position="32"/>
    </location>
</feature>
<feature type="modified residue" description="N6-succinyllysine; alternate" evidence="2">
    <location>
        <position position="32"/>
    </location>
</feature>
<feature type="modified residue" description="N6-(2-hydroxyisobutyryl)lysine; alternate" evidence="2">
    <location>
        <position position="45"/>
    </location>
</feature>
<feature type="modified residue" description="N6-butyryllysine; alternate" evidence="2">
    <location>
        <position position="45"/>
    </location>
</feature>
<feature type="modified residue" description="N6-propionyllysine; alternate" evidence="2">
    <location>
        <position position="45"/>
    </location>
</feature>
<feature type="modified residue" description="Phosphoserine; by PAK2" evidence="2">
    <location>
        <position position="48"/>
    </location>
</feature>
<feature type="modified residue" description="Phosphotyrosine" evidence="2">
    <location>
        <position position="52"/>
    </location>
</feature>
<feature type="modified residue" description="N6-(2-hydroxyisobutyryl)lysine" evidence="2">
    <location>
        <position position="60"/>
    </location>
</feature>
<feature type="modified residue" description="N6-acetyllysine" evidence="2">
    <location>
        <position position="60"/>
    </location>
</feature>
<feature type="modified residue" description="N6-glutaryllysine; alternate" evidence="2">
    <location>
        <position position="60"/>
    </location>
</feature>
<feature type="modified residue" description="N6-(2-hydroxyisobutyryl)lysine; alternate" evidence="2">
    <location>
        <position position="78"/>
    </location>
</feature>
<feature type="modified residue" description="N6-butyryllysine; alternate" evidence="2">
    <location>
        <position position="78"/>
    </location>
</feature>
<feature type="modified residue" description="N6-glutaryllysine; alternate" evidence="2">
    <location>
        <position position="78"/>
    </location>
</feature>
<feature type="modified residue" description="N6-lactoyllysine; alternate" evidence="2">
    <location>
        <position position="78"/>
    </location>
</feature>
<feature type="modified residue" description="N6-propionyllysine; alternate" evidence="2">
    <location>
        <position position="78"/>
    </location>
</feature>
<feature type="modified residue" description="N6-succinyllysine" evidence="2">
    <location>
        <position position="78"/>
    </location>
</feature>
<feature type="modified residue" description="N6-(2-hydroxyisobutyryl)lysine; alternate" evidence="2">
    <location>
        <position position="80"/>
    </location>
</feature>
<feature type="modified residue" description="N6-acetyllysine" evidence="2">
    <location>
        <position position="80"/>
    </location>
</feature>
<feature type="modified residue" description="N6-butyryllysine; alternate" evidence="2">
    <location>
        <position position="80"/>
    </location>
</feature>
<feature type="modified residue" description="N6-glutaryllysine; alternate" evidence="2">
    <location>
        <position position="80"/>
    </location>
</feature>
<feature type="modified residue" description="N6-propionyllysine; alternate" evidence="2">
    <location>
        <position position="80"/>
    </location>
</feature>
<feature type="modified residue" description="Phosphotyrosine" evidence="2">
    <location>
        <position position="89"/>
    </location>
</feature>
<feature type="modified residue" description="N6-(2-hydroxyisobutyryl)lysine; alternate" evidence="2">
    <location>
        <position position="92"/>
    </location>
</feature>
<feature type="modified residue" description="N6-acetyllysine; alternate" evidence="2">
    <location>
        <position position="92"/>
    </location>
</feature>
<feature type="modified residue" description="N6-butyryllysine; alternate" evidence="2">
    <location>
        <position position="92"/>
    </location>
</feature>
<feature type="modified residue" description="N6-glutaryllysine; alternate" evidence="2">
    <location>
        <position position="92"/>
    </location>
</feature>
<feature type="modified residue" description="N6-lactoyllysine; alternate" evidence="2">
    <location>
        <position position="92"/>
    </location>
</feature>
<feature type="modified residue" description="N6-propionyllysine; alternate" evidence="2">
    <location>
        <position position="92"/>
    </location>
</feature>
<feature type="modified residue" description="N6-succinyllysine; alternate" evidence="2">
    <location>
        <position position="92"/>
    </location>
</feature>
<feature type="cross-link" description="Glycyl lysine isopeptide (Lys-Gly) (interchain with G-Cter in UFM1); alternate" evidence="2">
    <location>
        <position position="32"/>
    </location>
</feature>
<feature type="cross-link" description="Glycyl lysine isopeptide (Lys-Gly) (interchain with G-Cter in ubiquitin); alternate" evidence="2">
    <location>
        <position position="92"/>
    </location>
</feature>
<protein>
    <recommendedName>
        <fullName>Histone H4</fullName>
    </recommendedName>
</protein>
<keyword id="KW-0007">Acetylation</keyword>
<keyword id="KW-0158">Chromosome</keyword>
<keyword id="KW-0164">Citrullination</keyword>
<keyword id="KW-0238">DNA-binding</keyword>
<keyword id="KW-0379">Hydroxylation</keyword>
<keyword id="KW-1017">Isopeptide bond</keyword>
<keyword id="KW-0488">Methylation</keyword>
<keyword id="KW-0544">Nucleosome core</keyword>
<keyword id="KW-0539">Nucleus</keyword>
<keyword id="KW-0597">Phosphoprotein</keyword>
<keyword id="KW-1185">Reference proteome</keyword>
<keyword id="KW-0832">Ubl conjugation</keyword>
<name>H4_ORENI</name>